<protein>
    <recommendedName>
        <fullName evidence="6">Large ribosomal subunit protein uL15m</fullName>
    </recommendedName>
    <alternativeName>
        <fullName>39S ribosomal protein L15, mitochondrial</fullName>
        <shortName>L15mt</shortName>
        <shortName>MRP-L15</shortName>
    </alternativeName>
</protein>
<gene>
    <name type="primary">Mrpl15</name>
</gene>
<comment type="subunit">
    <text evidence="2">Component of the mitochondrial ribosome large subunit (39S) which comprises a 16S rRNA and about 50 distinct proteins.</text>
</comment>
<comment type="subcellular location">
    <subcellularLocation>
        <location evidence="2">Mitochondrion</location>
    </subcellularLocation>
</comment>
<comment type="alternative products">
    <event type="alternative splicing"/>
    <isoform>
        <id>Q9CPR5-1</id>
        <name>1</name>
        <sequence type="displayed"/>
    </isoform>
    <isoform>
        <id>Q9CPR5-2</id>
        <name>2</name>
        <sequence type="described" ref="VSP_021370 VSP_021371"/>
    </isoform>
</comment>
<comment type="similarity">
    <text evidence="6">Belongs to the universal ribosomal protein uL15 family.</text>
</comment>
<comment type="sequence caution" evidence="6">
    <conflict type="erroneous initiation">
        <sequence resource="EMBL-CDS" id="BAB27054"/>
    </conflict>
</comment>
<proteinExistence type="evidence at protein level"/>
<keyword id="KW-0025">Alternative splicing</keyword>
<keyword id="KW-0496">Mitochondrion</keyword>
<keyword id="KW-1185">Reference proteome</keyword>
<keyword id="KW-0687">Ribonucleoprotein</keyword>
<keyword id="KW-0689">Ribosomal protein</keyword>
<keyword id="KW-0809">Transit peptide</keyword>
<accession>Q9CPR5</accession>
<accession>Q3UBN5</accession>
<accession>Q9CPP5</accession>
<accession>Q9CRH4</accession>
<name>RM15_MOUSE</name>
<reference key="1">
    <citation type="journal article" date="2005" name="Science">
        <title>The transcriptional landscape of the mammalian genome.</title>
        <authorList>
            <person name="Carninci P."/>
            <person name="Kasukawa T."/>
            <person name="Katayama S."/>
            <person name="Gough J."/>
            <person name="Frith M.C."/>
            <person name="Maeda N."/>
            <person name="Oyama R."/>
            <person name="Ravasi T."/>
            <person name="Lenhard B."/>
            <person name="Wells C."/>
            <person name="Kodzius R."/>
            <person name="Shimokawa K."/>
            <person name="Bajic V.B."/>
            <person name="Brenner S.E."/>
            <person name="Batalov S."/>
            <person name="Forrest A.R."/>
            <person name="Zavolan M."/>
            <person name="Davis M.J."/>
            <person name="Wilming L.G."/>
            <person name="Aidinis V."/>
            <person name="Allen J.E."/>
            <person name="Ambesi-Impiombato A."/>
            <person name="Apweiler R."/>
            <person name="Aturaliya R.N."/>
            <person name="Bailey T.L."/>
            <person name="Bansal M."/>
            <person name="Baxter L."/>
            <person name="Beisel K.W."/>
            <person name="Bersano T."/>
            <person name="Bono H."/>
            <person name="Chalk A.M."/>
            <person name="Chiu K.P."/>
            <person name="Choudhary V."/>
            <person name="Christoffels A."/>
            <person name="Clutterbuck D.R."/>
            <person name="Crowe M.L."/>
            <person name="Dalla E."/>
            <person name="Dalrymple B.P."/>
            <person name="de Bono B."/>
            <person name="Della Gatta G."/>
            <person name="di Bernardo D."/>
            <person name="Down T."/>
            <person name="Engstrom P."/>
            <person name="Fagiolini M."/>
            <person name="Faulkner G."/>
            <person name="Fletcher C.F."/>
            <person name="Fukushima T."/>
            <person name="Furuno M."/>
            <person name="Futaki S."/>
            <person name="Gariboldi M."/>
            <person name="Georgii-Hemming P."/>
            <person name="Gingeras T.R."/>
            <person name="Gojobori T."/>
            <person name="Green R.E."/>
            <person name="Gustincich S."/>
            <person name="Harbers M."/>
            <person name="Hayashi Y."/>
            <person name="Hensch T.K."/>
            <person name="Hirokawa N."/>
            <person name="Hill D."/>
            <person name="Huminiecki L."/>
            <person name="Iacono M."/>
            <person name="Ikeo K."/>
            <person name="Iwama A."/>
            <person name="Ishikawa T."/>
            <person name="Jakt M."/>
            <person name="Kanapin A."/>
            <person name="Katoh M."/>
            <person name="Kawasawa Y."/>
            <person name="Kelso J."/>
            <person name="Kitamura H."/>
            <person name="Kitano H."/>
            <person name="Kollias G."/>
            <person name="Krishnan S.P."/>
            <person name="Kruger A."/>
            <person name="Kummerfeld S.K."/>
            <person name="Kurochkin I.V."/>
            <person name="Lareau L.F."/>
            <person name="Lazarevic D."/>
            <person name="Lipovich L."/>
            <person name="Liu J."/>
            <person name="Liuni S."/>
            <person name="McWilliam S."/>
            <person name="Madan Babu M."/>
            <person name="Madera M."/>
            <person name="Marchionni L."/>
            <person name="Matsuda H."/>
            <person name="Matsuzawa S."/>
            <person name="Miki H."/>
            <person name="Mignone F."/>
            <person name="Miyake S."/>
            <person name="Morris K."/>
            <person name="Mottagui-Tabar S."/>
            <person name="Mulder N."/>
            <person name="Nakano N."/>
            <person name="Nakauchi H."/>
            <person name="Ng P."/>
            <person name="Nilsson R."/>
            <person name="Nishiguchi S."/>
            <person name="Nishikawa S."/>
            <person name="Nori F."/>
            <person name="Ohara O."/>
            <person name="Okazaki Y."/>
            <person name="Orlando V."/>
            <person name="Pang K.C."/>
            <person name="Pavan W.J."/>
            <person name="Pavesi G."/>
            <person name="Pesole G."/>
            <person name="Petrovsky N."/>
            <person name="Piazza S."/>
            <person name="Reed J."/>
            <person name="Reid J.F."/>
            <person name="Ring B.Z."/>
            <person name="Ringwald M."/>
            <person name="Rost B."/>
            <person name="Ruan Y."/>
            <person name="Salzberg S.L."/>
            <person name="Sandelin A."/>
            <person name="Schneider C."/>
            <person name="Schoenbach C."/>
            <person name="Sekiguchi K."/>
            <person name="Semple C.A."/>
            <person name="Seno S."/>
            <person name="Sessa L."/>
            <person name="Sheng Y."/>
            <person name="Shibata Y."/>
            <person name="Shimada H."/>
            <person name="Shimada K."/>
            <person name="Silva D."/>
            <person name="Sinclair B."/>
            <person name="Sperling S."/>
            <person name="Stupka E."/>
            <person name="Sugiura K."/>
            <person name="Sultana R."/>
            <person name="Takenaka Y."/>
            <person name="Taki K."/>
            <person name="Tammoja K."/>
            <person name="Tan S.L."/>
            <person name="Tang S."/>
            <person name="Taylor M.S."/>
            <person name="Tegner J."/>
            <person name="Teichmann S.A."/>
            <person name="Ueda H.R."/>
            <person name="van Nimwegen E."/>
            <person name="Verardo R."/>
            <person name="Wei C.L."/>
            <person name="Yagi K."/>
            <person name="Yamanishi H."/>
            <person name="Zabarovsky E."/>
            <person name="Zhu S."/>
            <person name="Zimmer A."/>
            <person name="Hide W."/>
            <person name="Bult C."/>
            <person name="Grimmond S.M."/>
            <person name="Teasdale R.D."/>
            <person name="Liu E.T."/>
            <person name="Brusic V."/>
            <person name="Quackenbush J."/>
            <person name="Wahlestedt C."/>
            <person name="Mattick J.S."/>
            <person name="Hume D.A."/>
            <person name="Kai C."/>
            <person name="Sasaki D."/>
            <person name="Tomaru Y."/>
            <person name="Fukuda S."/>
            <person name="Kanamori-Katayama M."/>
            <person name="Suzuki M."/>
            <person name="Aoki J."/>
            <person name="Arakawa T."/>
            <person name="Iida J."/>
            <person name="Imamura K."/>
            <person name="Itoh M."/>
            <person name="Kato T."/>
            <person name="Kawaji H."/>
            <person name="Kawagashira N."/>
            <person name="Kawashima T."/>
            <person name="Kojima M."/>
            <person name="Kondo S."/>
            <person name="Konno H."/>
            <person name="Nakano K."/>
            <person name="Ninomiya N."/>
            <person name="Nishio T."/>
            <person name="Okada M."/>
            <person name="Plessy C."/>
            <person name="Shibata K."/>
            <person name="Shiraki T."/>
            <person name="Suzuki S."/>
            <person name="Tagami M."/>
            <person name="Waki K."/>
            <person name="Watahiki A."/>
            <person name="Okamura-Oho Y."/>
            <person name="Suzuki H."/>
            <person name="Kawai J."/>
            <person name="Hayashizaki Y."/>
        </authorList>
    </citation>
    <scope>NUCLEOTIDE SEQUENCE [LARGE SCALE MRNA] (ISOFORMS 1 AND 2)</scope>
    <source>
        <strain>C57BL/6J</strain>
        <tissue>Bone marrow</tissue>
        <tissue>Embryo</tissue>
    </source>
</reference>
<reference key="2">
    <citation type="journal article" date="2004" name="Genome Res.">
        <title>The status, quality, and expansion of the NIH full-length cDNA project: the Mammalian Gene Collection (MGC).</title>
        <authorList>
            <consortium name="The MGC Project Team"/>
        </authorList>
    </citation>
    <scope>NUCLEOTIDE SEQUENCE [LARGE SCALE MRNA] (ISOFORM 2)</scope>
    <source>
        <strain>FVB/N</strain>
        <tissue>Mammary tumor</tissue>
    </source>
</reference>
<reference key="3">
    <citation type="journal article" date="2010" name="Cell">
        <title>A tissue-specific atlas of mouse protein phosphorylation and expression.</title>
        <authorList>
            <person name="Huttlin E.L."/>
            <person name="Jedrychowski M.P."/>
            <person name="Elias J.E."/>
            <person name="Goswami T."/>
            <person name="Rad R."/>
            <person name="Beausoleil S.A."/>
            <person name="Villen J."/>
            <person name="Haas W."/>
            <person name="Sowa M.E."/>
            <person name="Gygi S.P."/>
        </authorList>
    </citation>
    <scope>IDENTIFICATION BY MASS SPECTROMETRY [LARGE SCALE ANALYSIS]</scope>
    <source>
        <tissue>Brown adipose tissue</tissue>
        <tissue>Heart</tissue>
        <tissue>Kidney</tissue>
        <tissue>Liver</tissue>
    </source>
</reference>
<organism>
    <name type="scientific">Mus musculus</name>
    <name type="common">Mouse</name>
    <dbReference type="NCBI Taxonomy" id="10090"/>
    <lineage>
        <taxon>Eukaryota</taxon>
        <taxon>Metazoa</taxon>
        <taxon>Chordata</taxon>
        <taxon>Craniata</taxon>
        <taxon>Vertebrata</taxon>
        <taxon>Euteleostomi</taxon>
        <taxon>Mammalia</taxon>
        <taxon>Eutheria</taxon>
        <taxon>Euarchontoglires</taxon>
        <taxon>Glires</taxon>
        <taxon>Rodentia</taxon>
        <taxon>Myomorpha</taxon>
        <taxon>Muroidea</taxon>
        <taxon>Muridae</taxon>
        <taxon>Murinae</taxon>
        <taxon>Mus</taxon>
        <taxon>Mus</taxon>
    </lineage>
</organism>
<sequence>MAGTARGCGTSLDLLRSLPRVSLANLKPSPNSRKRERRPRDRRRGRKCGRGHKGERQRGTRPRLGFEGGQTPFYIRIPKYGFNEGHSFRHQYQPLSLRRLQYLIDLGRVDPTQPIDLTQLVNGRGVTIQPLKRDYGVQLVEEGADTFQAKINIEVQLASELAIAAIEKNGGVVTTAFYDPRSLEILCKPIPFFLRGQPIPKRMLPPESLVPYYTDAKNRGYLADPAKFPEARLELAMKFGYVLPDITKDELFRMLSARKDPRQIFFGLAPGWVVNMADKKILKPTDENLLKYYSS</sequence>
<dbReference type="EMBL" id="AK003367">
    <property type="protein sequence ID" value="BAB22741.1"/>
    <property type="molecule type" value="mRNA"/>
</dbReference>
<dbReference type="EMBL" id="AK010474">
    <property type="protein sequence ID" value="BAB26967.1"/>
    <property type="molecule type" value="mRNA"/>
</dbReference>
<dbReference type="EMBL" id="AK010604">
    <property type="protein sequence ID" value="BAB27054.1"/>
    <property type="status" value="ALT_INIT"/>
    <property type="molecule type" value="mRNA"/>
</dbReference>
<dbReference type="EMBL" id="AK017804">
    <property type="protein sequence ID" value="BAB30943.1"/>
    <property type="molecule type" value="mRNA"/>
</dbReference>
<dbReference type="EMBL" id="AK017824">
    <property type="protein sequence ID" value="BAB30958.1"/>
    <property type="molecule type" value="mRNA"/>
</dbReference>
<dbReference type="EMBL" id="AK019175">
    <property type="protein sequence ID" value="BAB31589.1"/>
    <property type="molecule type" value="mRNA"/>
</dbReference>
<dbReference type="EMBL" id="AK019249">
    <property type="protein sequence ID" value="BAB31626.1"/>
    <property type="molecule type" value="mRNA"/>
</dbReference>
<dbReference type="EMBL" id="AK150880">
    <property type="protein sequence ID" value="BAE29929.1"/>
    <property type="molecule type" value="mRNA"/>
</dbReference>
<dbReference type="EMBL" id="AK160660">
    <property type="protein sequence ID" value="BAE35948.1"/>
    <property type="molecule type" value="mRNA"/>
</dbReference>
<dbReference type="EMBL" id="BC021304">
    <property type="protein sequence ID" value="AAH21304.1"/>
    <property type="molecule type" value="mRNA"/>
</dbReference>
<dbReference type="EMBL" id="BC027233">
    <property type="protein sequence ID" value="AAH27233.1"/>
    <property type="molecule type" value="mRNA"/>
</dbReference>
<dbReference type="CCDS" id="CCDS35504.1">
    <molecule id="Q9CPR5-2"/>
</dbReference>
<dbReference type="CCDS" id="CCDS48211.1">
    <molecule id="Q9CPR5-1"/>
</dbReference>
<dbReference type="RefSeq" id="NP_001171129.1">
    <molecule id="Q9CPR5-1"/>
    <property type="nucleotide sequence ID" value="NM_001177658.2"/>
</dbReference>
<dbReference type="RefSeq" id="NP_079576.1">
    <molecule id="Q9CPR5-2"/>
    <property type="nucleotide sequence ID" value="NM_025300.5"/>
</dbReference>
<dbReference type="SMR" id="Q9CPR5"/>
<dbReference type="BioGRID" id="205202">
    <property type="interactions" value="15"/>
</dbReference>
<dbReference type="ComplexPortal" id="CPX-5302">
    <property type="entry name" value="39S mitochondrial large ribosomal subunit"/>
</dbReference>
<dbReference type="FunCoup" id="Q9CPR5">
    <property type="interactions" value="2176"/>
</dbReference>
<dbReference type="STRING" id="10090.ENSMUSP00000115512"/>
<dbReference type="iPTMnet" id="Q9CPR5"/>
<dbReference type="PhosphoSitePlus" id="Q9CPR5"/>
<dbReference type="PaxDb" id="10090-ENSMUSP00000115512"/>
<dbReference type="PeptideAtlas" id="Q9CPR5"/>
<dbReference type="ProteomicsDB" id="260977">
    <molecule id="Q9CPR5-1"/>
</dbReference>
<dbReference type="ProteomicsDB" id="260978">
    <molecule id="Q9CPR5-2"/>
</dbReference>
<dbReference type="Pumba" id="Q9CPR5"/>
<dbReference type="Antibodypedia" id="24498">
    <property type="antibodies" value="183 antibodies from 25 providers"/>
</dbReference>
<dbReference type="DNASU" id="27395"/>
<dbReference type="Ensembl" id="ENSMUST00000130201.8">
    <molecule id="Q9CPR5-2"/>
    <property type="protein sequence ID" value="ENSMUSP00000114649.2"/>
    <property type="gene ID" value="ENSMUSG00000033845.14"/>
</dbReference>
<dbReference type="Ensembl" id="ENSMUST00000156816.7">
    <molecule id="Q9CPR5-1"/>
    <property type="protein sequence ID" value="ENSMUSP00000115512.2"/>
    <property type="gene ID" value="ENSMUSG00000033845.14"/>
</dbReference>
<dbReference type="GeneID" id="27395"/>
<dbReference type="KEGG" id="mmu:27395"/>
<dbReference type="UCSC" id="uc007afd.3">
    <molecule id="Q9CPR5-2"/>
    <property type="organism name" value="mouse"/>
</dbReference>
<dbReference type="UCSC" id="uc007aff.3">
    <molecule id="Q9CPR5-1"/>
    <property type="organism name" value="mouse"/>
</dbReference>
<dbReference type="AGR" id="MGI:1351639"/>
<dbReference type="CTD" id="29088"/>
<dbReference type="MGI" id="MGI:1351639">
    <property type="gene designation" value="Mrpl15"/>
</dbReference>
<dbReference type="VEuPathDB" id="HostDB:ENSMUSG00000033845"/>
<dbReference type="eggNOG" id="KOG0846">
    <property type="taxonomic scope" value="Eukaryota"/>
</dbReference>
<dbReference type="GeneTree" id="ENSGT00390000009040"/>
<dbReference type="HOGENOM" id="CLU_055188_5_2_1"/>
<dbReference type="InParanoid" id="Q9CPR5"/>
<dbReference type="OMA" id="WFEGGQM"/>
<dbReference type="OrthoDB" id="361383at2759"/>
<dbReference type="PhylomeDB" id="Q9CPR5"/>
<dbReference type="TreeFam" id="TF105918"/>
<dbReference type="Reactome" id="R-MMU-5389840">
    <property type="pathway name" value="Mitochondrial translation elongation"/>
</dbReference>
<dbReference type="Reactome" id="R-MMU-5419276">
    <property type="pathway name" value="Mitochondrial translation termination"/>
</dbReference>
<dbReference type="BioGRID-ORCS" id="27395">
    <property type="hits" value="18 hits in 81 CRISPR screens"/>
</dbReference>
<dbReference type="ChiTaRS" id="Mrpl15">
    <property type="organism name" value="mouse"/>
</dbReference>
<dbReference type="PRO" id="PR:Q9CPR5"/>
<dbReference type="Proteomes" id="UP000000589">
    <property type="component" value="Chromosome 1"/>
</dbReference>
<dbReference type="RNAct" id="Q9CPR5">
    <property type="molecule type" value="protein"/>
</dbReference>
<dbReference type="Bgee" id="ENSMUSG00000033845">
    <property type="expression patterns" value="Expressed in blastoderm cell in morula and 252 other cell types or tissues"/>
</dbReference>
<dbReference type="ExpressionAtlas" id="Q9CPR5">
    <property type="expression patterns" value="baseline and differential"/>
</dbReference>
<dbReference type="GO" id="GO:0005743">
    <property type="term" value="C:mitochondrial inner membrane"/>
    <property type="evidence" value="ECO:0000303"/>
    <property type="project" value="ComplexPortal"/>
</dbReference>
<dbReference type="GO" id="GO:0005762">
    <property type="term" value="C:mitochondrial large ribosomal subunit"/>
    <property type="evidence" value="ECO:0000250"/>
    <property type="project" value="UniProtKB"/>
</dbReference>
<dbReference type="GO" id="GO:0005739">
    <property type="term" value="C:mitochondrion"/>
    <property type="evidence" value="ECO:0007005"/>
    <property type="project" value="MGI"/>
</dbReference>
<dbReference type="GO" id="GO:0003735">
    <property type="term" value="F:structural constituent of ribosome"/>
    <property type="evidence" value="ECO:0000247"/>
    <property type="project" value="MGI"/>
</dbReference>
<dbReference type="GO" id="GO:1990830">
    <property type="term" value="P:cellular response to leukemia inhibitory factor"/>
    <property type="evidence" value="ECO:0000270"/>
    <property type="project" value="MGI"/>
</dbReference>
<dbReference type="GO" id="GO:0000002">
    <property type="term" value="P:mitochondrial genome maintenance"/>
    <property type="evidence" value="ECO:0000304"/>
    <property type="project" value="MGI"/>
</dbReference>
<dbReference type="GO" id="GO:0032543">
    <property type="term" value="P:mitochondrial translation"/>
    <property type="evidence" value="ECO:0000303"/>
    <property type="project" value="ComplexPortal"/>
</dbReference>
<dbReference type="GO" id="GO:0006412">
    <property type="term" value="P:translation"/>
    <property type="evidence" value="ECO:0000247"/>
    <property type="project" value="MGI"/>
</dbReference>
<dbReference type="FunFam" id="3.100.10.10:FF:000006">
    <property type="entry name" value="39S ribosomal protein L15, mitochondrial"/>
    <property type="match status" value="1"/>
</dbReference>
<dbReference type="Gene3D" id="3.100.10.10">
    <property type="match status" value="1"/>
</dbReference>
<dbReference type="HAMAP" id="MF_01341">
    <property type="entry name" value="Ribosomal_uL15"/>
    <property type="match status" value="1"/>
</dbReference>
<dbReference type="InterPro" id="IPR030878">
    <property type="entry name" value="Ribosomal_uL15"/>
</dbReference>
<dbReference type="InterPro" id="IPR021131">
    <property type="entry name" value="Ribosomal_uL15/eL18"/>
</dbReference>
<dbReference type="InterPro" id="IPR036227">
    <property type="entry name" value="Ribosomal_uL15/eL18_sf"/>
</dbReference>
<dbReference type="InterPro" id="IPR005749">
    <property type="entry name" value="Ribosomal_uL15_bac-type"/>
</dbReference>
<dbReference type="PANTHER" id="PTHR12934">
    <property type="entry name" value="50S RIBOSOMAL PROTEIN L15"/>
    <property type="match status" value="1"/>
</dbReference>
<dbReference type="PANTHER" id="PTHR12934:SF11">
    <property type="entry name" value="LARGE RIBOSOMAL SUBUNIT PROTEIN UL15M"/>
    <property type="match status" value="1"/>
</dbReference>
<dbReference type="Pfam" id="PF00828">
    <property type="entry name" value="Ribosomal_L27A"/>
    <property type="match status" value="1"/>
</dbReference>
<dbReference type="SUPFAM" id="SSF52080">
    <property type="entry name" value="Ribosomal proteins L15p and L18e"/>
    <property type="match status" value="1"/>
</dbReference>
<evidence type="ECO:0000250" key="1">
    <source>
        <dbReference type="UniProtKB" id="Q0VC21"/>
    </source>
</evidence>
<evidence type="ECO:0000250" key="2">
    <source>
        <dbReference type="UniProtKB" id="Q9P015"/>
    </source>
</evidence>
<evidence type="ECO:0000256" key="3">
    <source>
        <dbReference type="SAM" id="MobiDB-lite"/>
    </source>
</evidence>
<evidence type="ECO:0000303" key="4">
    <source>
    </source>
</evidence>
<evidence type="ECO:0000303" key="5">
    <source>
    </source>
</evidence>
<evidence type="ECO:0000305" key="6"/>
<feature type="transit peptide" description="Mitochondrion" evidence="1">
    <location>
        <begin position="1"/>
        <end position="20"/>
    </location>
</feature>
<feature type="chain" id="PRO_0000257839" description="Large ribosomal subunit protein uL15m">
    <location>
        <begin position="21"/>
        <end position="295"/>
    </location>
</feature>
<feature type="region of interest" description="Disordered" evidence="3">
    <location>
        <begin position="21"/>
        <end position="67"/>
    </location>
</feature>
<feature type="compositionally biased region" description="Basic residues" evidence="3">
    <location>
        <begin position="32"/>
        <end position="51"/>
    </location>
</feature>
<feature type="splice variant" id="VSP_021370" description="In isoform 2." evidence="4 5">
    <original>EILCKPIPFFLRGQPIPKRML</original>
    <variation>GHLMHSSDFHGFSARYSIHIK</variation>
    <location>
        <begin position="184"/>
        <end position="204"/>
    </location>
</feature>
<feature type="splice variant" id="VSP_021371" description="In isoform 2." evidence="4 5">
    <location>
        <begin position="205"/>
        <end position="295"/>
    </location>
</feature>
<feature type="sequence conflict" description="In Ref. 1; BAB27054." evidence="6" ref="1">
    <original>M</original>
    <variation>L</variation>
    <location>
        <position position="1"/>
    </location>
</feature>
<feature type="sequence conflict" description="In Ref. 1; BAB27054." evidence="6" ref="1">
    <original>D</original>
    <variation>G</variation>
    <location>
        <position position="13"/>
    </location>
</feature>
<feature type="sequence conflict" description="In Ref. 1; BAB27054." evidence="6" ref="1">
    <original>E</original>
    <variation>G</variation>
    <location>
        <position position="36"/>
    </location>
</feature>
<feature type="sequence conflict" description="In Ref. 1; BAE29929." evidence="6" ref="1">
    <original>Q</original>
    <variation>K</variation>
    <location>
        <position position="119"/>
    </location>
</feature>